<dbReference type="EC" id="3.5.4.13" evidence="1"/>
<dbReference type="EMBL" id="X63438">
    <property type="protein sequence ID" value="CAA45033.1"/>
    <property type="molecule type" value="Genomic_DNA"/>
</dbReference>
<dbReference type="PIR" id="S26382">
    <property type="entry name" value="S26382"/>
</dbReference>
<dbReference type="SMR" id="Q02103"/>
<dbReference type="UniPathway" id="UPA00610">
    <property type="reaction ID" value="UER00665"/>
</dbReference>
<dbReference type="GO" id="GO:0008829">
    <property type="term" value="F:dCTP deaminase activity"/>
    <property type="evidence" value="ECO:0007669"/>
    <property type="project" value="UniProtKB-UniRule"/>
</dbReference>
<dbReference type="GO" id="GO:0000166">
    <property type="term" value="F:nucleotide binding"/>
    <property type="evidence" value="ECO:0007669"/>
    <property type="project" value="UniProtKB-KW"/>
</dbReference>
<dbReference type="GO" id="GO:0006226">
    <property type="term" value="P:dUMP biosynthetic process"/>
    <property type="evidence" value="ECO:0007669"/>
    <property type="project" value="UniProtKB-UniPathway"/>
</dbReference>
<dbReference type="GO" id="GO:0006229">
    <property type="term" value="P:dUTP biosynthetic process"/>
    <property type="evidence" value="ECO:0007669"/>
    <property type="project" value="UniProtKB-UniRule"/>
</dbReference>
<dbReference type="CDD" id="cd07557">
    <property type="entry name" value="trimeric_dUTPase"/>
    <property type="match status" value="1"/>
</dbReference>
<dbReference type="Gene3D" id="2.70.40.10">
    <property type="match status" value="1"/>
</dbReference>
<dbReference type="HAMAP" id="MF_00146">
    <property type="entry name" value="dCTP_deaminase"/>
    <property type="match status" value="1"/>
</dbReference>
<dbReference type="InterPro" id="IPR011962">
    <property type="entry name" value="dCTP_deaminase"/>
</dbReference>
<dbReference type="InterPro" id="IPR036157">
    <property type="entry name" value="dUTPase-like_sf"/>
</dbReference>
<dbReference type="InterPro" id="IPR033704">
    <property type="entry name" value="dUTPase_trimeric"/>
</dbReference>
<dbReference type="NCBIfam" id="TIGR02274">
    <property type="entry name" value="dCTP_deam"/>
    <property type="match status" value="1"/>
</dbReference>
<dbReference type="PANTHER" id="PTHR42680">
    <property type="entry name" value="DCTP DEAMINASE"/>
    <property type="match status" value="1"/>
</dbReference>
<dbReference type="PANTHER" id="PTHR42680:SF3">
    <property type="entry name" value="DCTP DEAMINASE"/>
    <property type="match status" value="1"/>
</dbReference>
<dbReference type="Pfam" id="PF22769">
    <property type="entry name" value="DCD"/>
    <property type="match status" value="1"/>
</dbReference>
<dbReference type="SUPFAM" id="SSF51283">
    <property type="entry name" value="dUTPase-like"/>
    <property type="match status" value="1"/>
</dbReference>
<gene>
    <name evidence="1" type="primary">dcd</name>
</gene>
<feature type="chain" id="PRO_0000156025" description="dCTP deaminase">
    <location>
        <begin position="1"/>
        <end position="173"/>
    </location>
</feature>
<feature type="active site" description="Proton donor/acceptor" evidence="1">
    <location>
        <position position="123"/>
    </location>
</feature>
<feature type="binding site" evidence="1">
    <location>
        <begin position="97"/>
        <end position="102"/>
    </location>
    <ligand>
        <name>dCTP</name>
        <dbReference type="ChEBI" id="CHEBI:61481"/>
    </ligand>
</feature>
<feature type="binding site" evidence="1">
    <location>
        <position position="113"/>
    </location>
    <ligand>
        <name>dCTP</name>
        <dbReference type="ChEBI" id="CHEBI:61481"/>
    </ligand>
</feature>
<feature type="binding site" evidence="1">
    <location>
        <position position="155"/>
    </location>
    <ligand>
        <name>dCTP</name>
        <dbReference type="ChEBI" id="CHEBI:61481"/>
    </ligand>
</feature>
<feature type="binding site" evidence="1">
    <location>
        <position position="162"/>
    </location>
    <ligand>
        <name>dCTP</name>
        <dbReference type="ChEBI" id="CHEBI:61481"/>
    </ligand>
</feature>
<keyword id="KW-0378">Hydrolase</keyword>
<keyword id="KW-0546">Nucleotide metabolism</keyword>
<keyword id="KW-0547">Nucleotide-binding</keyword>
<proteinExistence type="inferred from homology"/>
<sequence length="173" mass="19858">MILGDRDLKYYLEKGWIVISPLTQDTIRENGVDLRVGGEIARFKKTDEIYEDGKDPRSFYEIEKGDEFIIYPNEHVLLVTEEYVKLPNDVMAFVNLRSSFARLGLFVPPTIVDAGFEGQLTIEVLGSAFPVKIKRGTRFLHLIFARTLTPVENPYHGKYQGQQGVTLPKFKFR</sequence>
<evidence type="ECO:0000255" key="1">
    <source>
        <dbReference type="HAMAP-Rule" id="MF_00146"/>
    </source>
</evidence>
<evidence type="ECO:0000305" key="2"/>
<accession>Q02103</accession>
<protein>
    <recommendedName>
        <fullName evidence="1">dCTP deaminase</fullName>
        <ecNumber evidence="1">3.5.4.13</ecNumber>
    </recommendedName>
    <alternativeName>
        <fullName evidence="1">Deoxycytidine triphosphate deaminase</fullName>
    </alternativeName>
</protein>
<comment type="function">
    <text evidence="1">Catalyzes the deamination of dCTP to dUTP.</text>
</comment>
<comment type="catalytic activity">
    <reaction evidence="1">
        <text>dCTP + H2O + H(+) = dUTP + NH4(+)</text>
        <dbReference type="Rhea" id="RHEA:22680"/>
        <dbReference type="ChEBI" id="CHEBI:15377"/>
        <dbReference type="ChEBI" id="CHEBI:15378"/>
        <dbReference type="ChEBI" id="CHEBI:28938"/>
        <dbReference type="ChEBI" id="CHEBI:61481"/>
        <dbReference type="ChEBI" id="CHEBI:61555"/>
        <dbReference type="EC" id="3.5.4.13"/>
    </reaction>
</comment>
<comment type="pathway">
    <text evidence="1">Pyrimidine metabolism; dUMP biosynthesis; dUMP from dCTP (dUTP route): step 1/2.</text>
</comment>
<comment type="subunit">
    <text evidence="1">Homotrimer.</text>
</comment>
<comment type="similarity">
    <text evidence="1 2">Belongs to the dCTP deaminase family.</text>
</comment>
<organism>
    <name type="scientific">Acidianus ambivalens</name>
    <name type="common">Desulfurolobus ambivalens</name>
    <dbReference type="NCBI Taxonomy" id="2283"/>
    <lineage>
        <taxon>Archaea</taxon>
        <taxon>Thermoproteota</taxon>
        <taxon>Thermoprotei</taxon>
        <taxon>Sulfolobales</taxon>
        <taxon>Sulfolobaceae</taxon>
        <taxon>Acidianus</taxon>
    </lineage>
</organism>
<reference key="1">
    <citation type="journal article" date="1992" name="Nucleic Acids Res.">
        <title>Molecular characterisation of a DNA ligase gene of the extremely thermophilic archaeon Desulfurolobus ambivalens shows close phylogenetic relationship to eukaryotic ligases.</title>
        <authorList>
            <person name="Kletzin A."/>
        </authorList>
    </citation>
    <scope>NUCLEOTIDE SEQUENCE [GENOMIC DNA]</scope>
    <source>
        <strain>Lei 10 / DSM 3772 / JCM 9191</strain>
    </source>
</reference>
<reference key="2">
    <citation type="journal article" date="1995" name="Nucleic Acids Res.">
        <title>Novel protein families in archaean genomes.</title>
        <authorList>
            <person name="Ouzounis C."/>
            <person name="Kyrpides N."/>
            <person name="Sander C."/>
        </authorList>
    </citation>
    <scope>SIMILARITY</scope>
</reference>
<name>DCD_ACIAM</name>